<evidence type="ECO:0000250" key="1"/>
<evidence type="ECO:0000255" key="2"/>
<evidence type="ECO:0000255" key="3">
    <source>
        <dbReference type="PROSITE-ProRule" id="PRU00047"/>
    </source>
</evidence>
<evidence type="ECO:0000256" key="4">
    <source>
        <dbReference type="SAM" id="MobiDB-lite"/>
    </source>
</evidence>
<evidence type="ECO:0000305" key="5"/>
<protein>
    <recommendedName>
        <fullName>Endogenous retrovirus group K member 8 Gag polyprotein</fullName>
    </recommendedName>
    <alternativeName>
        <fullName>HERV-K115 Gag protein</fullName>
    </alternativeName>
    <alternativeName>
        <fullName>HERV-K_8p23.1 provirus ancestral Gag polyprotein</fullName>
        <shortName>Gag polyprotein</shortName>
    </alternativeName>
</protein>
<gene>
    <name type="primary">ERVK-8</name>
</gene>
<dbReference type="EMBL" id="AC134684">
    <property type="status" value="NOT_ANNOTATED_CDS"/>
    <property type="molecule type" value="Genomic_DNA"/>
</dbReference>
<dbReference type="SMR" id="P62685"/>
<dbReference type="BioMuta" id="HGNC:32302"/>
<dbReference type="jPOST" id="P62685"/>
<dbReference type="MassIVE" id="P62685"/>
<dbReference type="PeptideAtlas" id="P62685"/>
<dbReference type="GeneCards" id="ERVK-8"/>
<dbReference type="HGNC" id="HGNC:32302">
    <property type="gene designation" value="ERVK-8"/>
</dbReference>
<dbReference type="neXtProt" id="NX_P62685"/>
<dbReference type="PhylomeDB" id="P62685"/>
<dbReference type="Pharos" id="P62685">
    <property type="development level" value="Tdark"/>
</dbReference>
<dbReference type="Proteomes" id="UP000005640">
    <property type="component" value="Unplaced"/>
</dbReference>
<dbReference type="GO" id="GO:0005886">
    <property type="term" value="C:plasma membrane"/>
    <property type="evidence" value="ECO:0007669"/>
    <property type="project" value="UniProtKB-SubCell"/>
</dbReference>
<dbReference type="GO" id="GO:0003676">
    <property type="term" value="F:nucleic acid binding"/>
    <property type="evidence" value="ECO:0007669"/>
    <property type="project" value="InterPro"/>
</dbReference>
<dbReference type="GO" id="GO:0005198">
    <property type="term" value="F:structural molecule activity"/>
    <property type="evidence" value="ECO:0007669"/>
    <property type="project" value="InterPro"/>
</dbReference>
<dbReference type="GO" id="GO:0008270">
    <property type="term" value="F:zinc ion binding"/>
    <property type="evidence" value="ECO:0007669"/>
    <property type="project" value="UniProtKB-KW"/>
</dbReference>
<dbReference type="GO" id="GO:0016032">
    <property type="term" value="P:viral process"/>
    <property type="evidence" value="ECO:0007669"/>
    <property type="project" value="InterPro"/>
</dbReference>
<dbReference type="Gene3D" id="1.10.1200.30">
    <property type="match status" value="1"/>
</dbReference>
<dbReference type="Gene3D" id="1.10.375.10">
    <property type="entry name" value="Human Immunodeficiency Virus Type 1 Capsid Protein"/>
    <property type="match status" value="1"/>
</dbReference>
<dbReference type="Gene3D" id="1.10.150.490">
    <property type="entry name" value="Retroviral GAG p10 protein"/>
    <property type="match status" value="1"/>
</dbReference>
<dbReference type="Gene3D" id="4.10.60.10">
    <property type="entry name" value="Zinc finger, CCHC-type"/>
    <property type="match status" value="1"/>
</dbReference>
<dbReference type="InterPro" id="IPR003322">
    <property type="entry name" value="B_retro_matrix"/>
</dbReference>
<dbReference type="InterPro" id="IPR038124">
    <property type="entry name" value="B_retro_matrix_sf"/>
</dbReference>
<dbReference type="InterPro" id="IPR045345">
    <property type="entry name" value="Gag_p24_C"/>
</dbReference>
<dbReference type="InterPro" id="IPR050195">
    <property type="entry name" value="Primate_lentivir_Gag_pol-like"/>
</dbReference>
<dbReference type="InterPro" id="IPR008916">
    <property type="entry name" value="Retrov_capsid_C"/>
</dbReference>
<dbReference type="InterPro" id="IPR008919">
    <property type="entry name" value="Retrov_capsid_N"/>
</dbReference>
<dbReference type="InterPro" id="IPR010999">
    <property type="entry name" value="Retrovr_matrix"/>
</dbReference>
<dbReference type="InterPro" id="IPR001878">
    <property type="entry name" value="Znf_CCHC"/>
</dbReference>
<dbReference type="InterPro" id="IPR036875">
    <property type="entry name" value="Znf_CCHC_sf"/>
</dbReference>
<dbReference type="PANTHER" id="PTHR40389">
    <property type="entry name" value="ENDOGENOUS RETROVIRUS GROUP K MEMBER 24 GAG POLYPROTEIN-RELATED"/>
    <property type="match status" value="1"/>
</dbReference>
<dbReference type="PANTHER" id="PTHR40389:SF2">
    <property type="entry name" value="ENDOGENOUS RETROVIRUS GROUP K MEMBER 24 GAG POLYPROTEIN-RELATED"/>
    <property type="match status" value="1"/>
</dbReference>
<dbReference type="Pfam" id="PF02337">
    <property type="entry name" value="Gag_p10"/>
    <property type="match status" value="1"/>
</dbReference>
<dbReference type="Pfam" id="PF00607">
    <property type="entry name" value="Gag_p24"/>
    <property type="match status" value="1"/>
</dbReference>
<dbReference type="Pfam" id="PF19317">
    <property type="entry name" value="Gag_p24_C"/>
    <property type="match status" value="1"/>
</dbReference>
<dbReference type="Pfam" id="PF00098">
    <property type="entry name" value="zf-CCHC"/>
    <property type="match status" value="1"/>
</dbReference>
<dbReference type="Pfam" id="PF14787">
    <property type="entry name" value="zf-CCHC_5"/>
    <property type="match status" value="1"/>
</dbReference>
<dbReference type="SMART" id="SM00343">
    <property type="entry name" value="ZnF_C2HC"/>
    <property type="match status" value="2"/>
</dbReference>
<dbReference type="SUPFAM" id="SSF47836">
    <property type="entry name" value="Retroviral matrix proteins"/>
    <property type="match status" value="1"/>
</dbReference>
<dbReference type="SUPFAM" id="SSF47353">
    <property type="entry name" value="Retrovirus capsid dimerization domain-like"/>
    <property type="match status" value="1"/>
</dbReference>
<dbReference type="SUPFAM" id="SSF47943">
    <property type="entry name" value="Retrovirus capsid protein, N-terminal core domain"/>
    <property type="match status" value="1"/>
</dbReference>
<dbReference type="SUPFAM" id="SSF57756">
    <property type="entry name" value="Retrovirus zinc finger-like domains"/>
    <property type="match status" value="2"/>
</dbReference>
<dbReference type="PROSITE" id="PS50158">
    <property type="entry name" value="ZF_CCHC"/>
    <property type="match status" value="1"/>
</dbReference>
<keyword id="KW-1003">Cell membrane</keyword>
<keyword id="KW-0895">ERV</keyword>
<keyword id="KW-0449">Lipoprotein</keyword>
<keyword id="KW-0472">Membrane</keyword>
<keyword id="KW-0479">Metal-binding</keyword>
<keyword id="KW-0519">Myristate</keyword>
<keyword id="KW-1185">Reference proteome</keyword>
<keyword id="KW-0677">Repeat</keyword>
<keyword id="KW-0814">Transposable element</keyword>
<keyword id="KW-0862">Zinc</keyword>
<keyword id="KW-0863">Zinc-finger</keyword>
<reference key="1">
    <citation type="journal article" date="2006" name="Nature">
        <title>DNA sequence and analysis of human chromosome 8.</title>
        <authorList>
            <person name="Nusbaum C."/>
            <person name="Mikkelsen T.S."/>
            <person name="Zody M.C."/>
            <person name="Asakawa S."/>
            <person name="Taudien S."/>
            <person name="Garber M."/>
            <person name="Kodira C.D."/>
            <person name="Schueler M.G."/>
            <person name="Shimizu A."/>
            <person name="Whittaker C.A."/>
            <person name="Chang J.L."/>
            <person name="Cuomo C.A."/>
            <person name="Dewar K."/>
            <person name="FitzGerald M.G."/>
            <person name="Yang X."/>
            <person name="Allen N.R."/>
            <person name="Anderson S."/>
            <person name="Asakawa T."/>
            <person name="Blechschmidt K."/>
            <person name="Bloom T."/>
            <person name="Borowsky M.L."/>
            <person name="Butler J."/>
            <person name="Cook A."/>
            <person name="Corum B."/>
            <person name="DeArellano K."/>
            <person name="DeCaprio D."/>
            <person name="Dooley K.T."/>
            <person name="Dorris L. III"/>
            <person name="Engels R."/>
            <person name="Gloeckner G."/>
            <person name="Hafez N."/>
            <person name="Hagopian D.S."/>
            <person name="Hall J.L."/>
            <person name="Ishikawa S.K."/>
            <person name="Jaffe D.B."/>
            <person name="Kamat A."/>
            <person name="Kudoh J."/>
            <person name="Lehmann R."/>
            <person name="Lokitsang T."/>
            <person name="Macdonald P."/>
            <person name="Major J.E."/>
            <person name="Matthews C.D."/>
            <person name="Mauceli E."/>
            <person name="Menzel U."/>
            <person name="Mihalev A.H."/>
            <person name="Minoshima S."/>
            <person name="Murayama Y."/>
            <person name="Naylor J.W."/>
            <person name="Nicol R."/>
            <person name="Nguyen C."/>
            <person name="O'Leary S.B."/>
            <person name="O'Neill K."/>
            <person name="Parker S.C.J."/>
            <person name="Polley A."/>
            <person name="Raymond C.K."/>
            <person name="Reichwald K."/>
            <person name="Rodriguez J."/>
            <person name="Sasaki T."/>
            <person name="Schilhabel M."/>
            <person name="Siddiqui R."/>
            <person name="Smith C.L."/>
            <person name="Sneddon T.P."/>
            <person name="Talamas J.A."/>
            <person name="Tenzin P."/>
            <person name="Topham K."/>
            <person name="Venkataraman V."/>
            <person name="Wen G."/>
            <person name="Yamazaki S."/>
            <person name="Young S.K."/>
            <person name="Zeng Q."/>
            <person name="Zimmer A.R."/>
            <person name="Rosenthal A."/>
            <person name="Birren B.W."/>
            <person name="Platzer M."/>
            <person name="Shimizu N."/>
            <person name="Lander E.S."/>
        </authorList>
    </citation>
    <scope>NUCLEOTIDE SEQUENCE [LARGE SCALE GENOMIC DNA]</scope>
</reference>
<reference key="2">
    <citation type="journal article" date="2001" name="Curr. Biol.">
        <title>Insertional polymorphisms of full-length endogenous retroviruses in humans.</title>
        <authorList>
            <person name="Turner G."/>
            <person name="Barbulescu M."/>
            <person name="Su M."/>
            <person name="Jensen-Seaman M.I."/>
            <person name="Kidd K.K."/>
            <person name="Lenz J."/>
        </authorList>
    </citation>
    <scope>IDENTIFICATION</scope>
</reference>
<reference key="3">
    <citation type="journal article" date="1995" name="J. Virol.">
        <title>Human endogenous retrovirus K10: expression of Gag protein and detection of antibodies in patients with seminomas.</title>
        <authorList>
            <person name="Sauter M."/>
            <person name="Schommer S."/>
            <person name="Kremmer E."/>
            <person name="Remberger K."/>
            <person name="Doelken G."/>
            <person name="Lemm I."/>
            <person name="Buck M."/>
            <person name="Best B."/>
            <person name="Neumann-Haefelin D."/>
            <person name="Mueller-Lantzsch N."/>
        </authorList>
    </citation>
    <scope>CHARACTERIZATION</scope>
</reference>
<comment type="function">
    <text>The products of the Gag polyproteins of infectious retroviruses perform highly complex orchestrated tasks during the assembly, budding, maturation, and infection stages of the viral replication cycle. During viral assembly, the proteins form membrane associations and self-associations that ultimately result in budding of an immature virion from the infected cell. Gag precursors also function during viral assembly to selectively bind and package two plus strands of genomic RNA. Endogenous Gag proteins may have kept, lost or modified their original function during evolution.</text>
</comment>
<comment type="subcellular location">
    <subcellularLocation>
        <location>Cell membrane</location>
        <topology>Lipid-anchor</topology>
    </subcellularLocation>
    <text evidence="1">Cytoplasmic membrane (in a transfection system).</text>
</comment>
<comment type="domain">
    <text>HERV-K Gag polyprotein contains regions homologous to the matrix (MA), capsid (CA) and nucleocapsid (NC) proteins from infectious retroviruses. Evidence suggests that HERV-K(HML-2) Gag polyprotein can be cleaved into mature MA, CA and NC under certain circumstances. However, the exact boundaries as well as the size of processed Gag proteins have not been precisely determined yet.</text>
</comment>
<comment type="PTM">
    <text evidence="1">Myristoylation is essential for retroviral assembly. Alteration of the glycine residue leads to a block in the budding of particles and an accumulation of Gag inside the cell (By similarity).</text>
</comment>
<comment type="PTM">
    <text evidence="5">Specific enzymatic cleavages may yield mature proteins.</text>
</comment>
<comment type="miscellaneous">
    <text>Insertional polymorphism. Provirus present in 16% of tested individuals.</text>
</comment>
<comment type="miscellaneous">
    <text>Intragenic, in first intron of DEFB107 gene.</text>
</comment>
<comment type="similarity">
    <text evidence="5">Belongs to the beta type-B retroviral Gag protein family. HERV class-II K(HML-2) gag subfamily.</text>
</comment>
<name>GAK8_HUMAN</name>
<feature type="initiator methionine" description="Removed" evidence="2">
    <location>
        <position position="1"/>
    </location>
</feature>
<feature type="chain" id="PRO_0000186749" description="Endogenous retrovirus group K member 8 Gag polyprotein">
    <location>
        <begin position="2"/>
        <end position="647"/>
    </location>
</feature>
<feature type="zinc finger region" description="CCHC-type 1" evidence="3">
    <location>
        <begin position="544"/>
        <end position="561"/>
    </location>
</feature>
<feature type="zinc finger region" description="CCHC-type 2" evidence="3">
    <location>
        <begin position="580"/>
        <end position="597"/>
    </location>
</feature>
<feature type="region of interest" description="Disordered" evidence="4">
    <location>
        <begin position="165"/>
        <end position="264"/>
    </location>
</feature>
<feature type="region of interest" description="Disordered" evidence="4">
    <location>
        <begin position="598"/>
        <end position="641"/>
    </location>
</feature>
<feature type="compositionally biased region" description="Pro residues" evidence="4">
    <location>
        <begin position="232"/>
        <end position="247"/>
    </location>
</feature>
<feature type="compositionally biased region" description="Polar residues" evidence="4">
    <location>
        <begin position="604"/>
        <end position="622"/>
    </location>
</feature>
<feature type="lipid moiety-binding region" description="N-myristoyl glycine" evidence="2">
    <location>
        <position position="2"/>
    </location>
</feature>
<accession>P62685</accession>
<proteinExistence type="evidence at protein level"/>
<organism>
    <name type="scientific">Homo sapiens</name>
    <name type="common">Human</name>
    <dbReference type="NCBI Taxonomy" id="9606"/>
    <lineage>
        <taxon>Eukaryota</taxon>
        <taxon>Metazoa</taxon>
        <taxon>Chordata</taxon>
        <taxon>Craniata</taxon>
        <taxon>Vertebrata</taxon>
        <taxon>Euteleostomi</taxon>
        <taxon>Mammalia</taxon>
        <taxon>Eutheria</taxon>
        <taxon>Euarchontoglires</taxon>
        <taxon>Primates</taxon>
        <taxon>Haplorrhini</taxon>
        <taxon>Catarrhini</taxon>
        <taxon>Hominidae</taxon>
        <taxon>Homo</taxon>
    </lineage>
</organism>
<sequence length="647" mass="72181">MGQTKSKIKSKYASYLSFIKILLKRGGVKVSTKNLIKLFQIIEQFCPWFPEQGTLDLKDWKRIGKELKQAGRKGNIIPLTVWNDWAIIKAALEPFQTEEDSISVSDAPGSCLIDCNENTRKKSQKETESLHCEYVAEPVMAQSTQNVDYNQLQEVIYPETLKLEGKGPELVGPSESKPRGTSPLPAGQVPVTLQPQKQVKENKTQPPVAYQYWPPAELQYRPPPESQYGYPGMPPAPQGREPYPQPPTRRLNPTAPPSRQGSELHEIIDKSRKEGDTEAWQFPVTLEPMPPGEGAQEGEPPTVEARYKSFSIKMLKDMKEGVKQYGPNSPYMRTLLDSIAHGHRLIPYDWEILAKSSLSPSQFLQFKTWWIDGVQEQVRRNRAANPPVNIDADQLLGIGQNWSTISQQALMQNEAIEQVRAICLRAWEKIQDPGSTCPSFNTVRQGSKEPYPDFVARLQDVAQKSIADEKARKVIVELMAYENANPECQSAIKPLKGKVPAGSDVISEYVKACDGIGGAMHKAMLMAQAITGVVLGGQVRTFGGKCYNCGQIGHLKKNCPVLNKQNITIQATTTGREPPDLCPRCKKGKHWASQCRSKFDKNGQPLSGNEQRGQPQAPQQTGAFPIQPFVPQGFQDNNPHCPKCFRE</sequence>